<protein>
    <recommendedName>
        <fullName evidence="2">Pumilarin</fullName>
    </recommendedName>
    <alternativeName>
        <fullName evidence="2">Circular bacteriocin</fullName>
    </alternativeName>
    <alternativeName>
        <fullName evidence="2">Enterocin AS-48-like</fullName>
    </alternativeName>
    <alternativeName>
        <fullName evidence="2">Head-to-tail cyclized peptide</fullName>
    </alternativeName>
</protein>
<reference key="1">
    <citation type="journal article" date="2015" name="Genome Announc.">
        <title>Draft genome sequences of five spore-forming food isolates of Bacillus pumilus.</title>
        <authorList>
            <person name="de Jong A."/>
            <person name="van Heel A.J."/>
            <person name="Montalban-Lopez M."/>
            <person name="Krawczyk A.O."/>
            <person name="Berendsen E.M."/>
            <person name="Wells-Bennik M."/>
            <person name="Kuipers O.P."/>
        </authorList>
    </citation>
    <scope>NUCLEOTIDE SEQUENCE [LARGE SCALE GENOMIC DNA]</scope>
    <source>
        <strain>B4107</strain>
    </source>
</reference>
<reference key="2">
    <citation type="journal article" date="2017" name="Microb. Genom.">
        <title>Genome-guided identification of novel head-to-tail cyclized antimicrobial peptides, exemplified by the discovery of pumilarin.</title>
        <authorList>
            <person name="van Heel A.J."/>
            <person name="Montalban-Lopez M."/>
            <person name="Oliveau Q."/>
            <person name="Kuipers O.P."/>
        </authorList>
    </citation>
    <scope>FUNCTION</scope>
    <scope>MASS SPECTROMETRY</scope>
    <scope>SUBCELLULAR LOCATION</scope>
    <scope>CROSS-LINK</scope>
    <source>
        <strain>B4107</strain>
    </source>
</reference>
<keyword id="KW-0044">Antibiotic</keyword>
<keyword id="KW-0929">Antimicrobial</keyword>
<keyword id="KW-0078">Bacteriocin</keyword>
<keyword id="KW-0964">Secreted</keyword>
<comment type="function">
    <text evidence="1 4">Cyclopeptide antibiotic that inhibits both Gram-positive and Gram-negative bacteria (PubMed:29177092). Shows potent to weak activities against M.flavus (MIC=3 ug/ml), B.cereus (MIC=12 ug/ml), B.pumilus (MIC=12 ug/ml), E.coli (MIC=12 ug/ml), and S.pneumoniae (MIC=47 ug/ml) (PubMed:29177092). May act by forming pores (Probable).</text>
</comment>
<comment type="subcellular location">
    <subcellularLocation>
        <location evidence="4">Secreted</location>
    </subcellularLocation>
</comment>
<comment type="PTM">
    <text evidence="1">The cross-link permits a high resistance to proteolysis. Is more resistant to specific proteases than to unspecific proteases.</text>
</comment>
<comment type="mass spectrometry" mass="7083.07" method="MALDI" evidence="1">
    <text>Monoisotopic mass.</text>
</comment>
<comment type="caution">
    <text evidence="3">Strain B4107 was originally classified as being from Bacillus pumilus, hence protein name pumilarin.</text>
</comment>
<proteinExistence type="evidence at protein level"/>
<gene>
    <name type="ORF">B4107_2383</name>
</gene>
<organism>
    <name type="scientific">Bacillus safensis</name>
    <dbReference type="NCBI Taxonomy" id="561879"/>
    <lineage>
        <taxon>Bacteria</taxon>
        <taxon>Bacillati</taxon>
        <taxon>Bacillota</taxon>
        <taxon>Bacilli</taxon>
        <taxon>Bacillales</taxon>
        <taxon>Bacillaceae</taxon>
        <taxon>Bacillus</taxon>
    </lineage>
</organism>
<name>AS48L_BACIA</name>
<sequence length="108" mass="11284">MTETKNEIKLHVLFGALAVGFLMLALFSFSLQMLPVADLAKEFGIPGSVAAVVLNVVEAGGAVTTIVSILTAVGSGGLSLIAAAGKETIRQYLKNEIKKKGRKAVIAW</sequence>
<dbReference type="EMBL" id="JXCK01000019">
    <property type="protein sequence ID" value="KIL16204.1"/>
    <property type="molecule type" value="Genomic_DNA"/>
</dbReference>
<dbReference type="RefSeq" id="WP_024423066.1">
    <property type="nucleotide sequence ID" value="NZ_WCHQ01000001.1"/>
</dbReference>
<dbReference type="SMR" id="P0DTW2"/>
<dbReference type="GO" id="GO:0005576">
    <property type="term" value="C:extracellular region"/>
    <property type="evidence" value="ECO:0007669"/>
    <property type="project" value="UniProtKB-SubCell"/>
</dbReference>
<dbReference type="GO" id="GO:0042742">
    <property type="term" value="P:defense response to bacterium"/>
    <property type="evidence" value="ECO:0007669"/>
    <property type="project" value="UniProtKB-KW"/>
</dbReference>
<dbReference type="GO" id="GO:0031640">
    <property type="term" value="P:killing of cells of another organism"/>
    <property type="evidence" value="ECO:0007669"/>
    <property type="project" value="UniProtKB-KW"/>
</dbReference>
<dbReference type="Gene3D" id="1.20.225.10">
    <property type="entry name" value="Bacteriocin AS-48"/>
    <property type="match status" value="1"/>
</dbReference>
<dbReference type="InterPro" id="IPR009086">
    <property type="entry name" value="Bacteriocin_AS48"/>
</dbReference>
<dbReference type="InterPro" id="IPR020038">
    <property type="entry name" value="Circ_bacteriocin"/>
</dbReference>
<dbReference type="NCBIfam" id="TIGR03651">
    <property type="entry name" value="circ_ocin_uber"/>
    <property type="match status" value="1"/>
</dbReference>
<dbReference type="Pfam" id="PF09221">
    <property type="entry name" value="Bacteriocin_IId"/>
    <property type="match status" value="1"/>
</dbReference>
<dbReference type="SUPFAM" id="SSF47869">
    <property type="entry name" value="Bacteriocin AS-48"/>
    <property type="match status" value="1"/>
</dbReference>
<accession>P0DTW2</accession>
<feature type="propeptide" id="PRO_0000450463" evidence="4">
    <location>
        <begin position="1"/>
        <end position="38"/>
    </location>
</feature>
<feature type="chain" id="PRO_0000450464" description="Pumilarin" evidence="1">
    <location>
        <begin position="39"/>
        <end position="108"/>
    </location>
</feature>
<feature type="cross-link" description="Cyclopeptide (Leu-Trp)" evidence="1">
    <location>
        <begin position="39"/>
        <end position="108"/>
    </location>
</feature>
<evidence type="ECO:0000269" key="1">
    <source>
    </source>
</evidence>
<evidence type="ECO:0000303" key="2">
    <source>
    </source>
</evidence>
<evidence type="ECO:0000305" key="3"/>
<evidence type="ECO:0000305" key="4">
    <source>
    </source>
</evidence>